<sequence length="354" mass="39727">MALNHTALPQDERLPHYLRDGDPFASKLSWEADLVAGFYLTIIGILSTFGNGYVLYMSSRRKKKLRPAEIMTINLAVCDLGISVVGKPFTIISCFCHRWVFGWIGCRWYGWAGFFFGCGSLITMTAVSLDRYLKICYLSYGVWLKRKHAYICLAAIWAYASFWTTMPLVGLGDYVPEPFGTSCTLDWWLAQASVGGQVFILNILFFCLLLPTAVIVFSYVKIIAKVKSSSKEVAHFDSRIHSSHVLEMKLTKVAMLICAGFLIAWIPYAVVSVWSAFGRPDSIPIQLSVVPTLLAKSAAMYNPIIYQVIDYKFACCQTGGLKATKKKSLEGFRLHTVTTVRKSSAVLEIHEEWE</sequence>
<gene>
    <name type="primary">OPN5</name>
    <name type="synonym">GPR136</name>
    <name type="synonym">PGR12</name>
    <name type="synonym">TMEM13</name>
</gene>
<dbReference type="EMBL" id="AY377391">
    <property type="protein sequence ID" value="AAR21109.1"/>
    <property type="molecule type" value="mRNA"/>
</dbReference>
<dbReference type="EMBL" id="AY288419">
    <property type="protein sequence ID" value="AAP72128.1"/>
    <property type="molecule type" value="mRNA"/>
</dbReference>
<dbReference type="EMBL" id="AY255615">
    <property type="protein sequence ID" value="AAO85127.1"/>
    <property type="molecule type" value="mRNA"/>
</dbReference>
<dbReference type="EMBL" id="AL356421">
    <property type="status" value="NOT_ANNOTATED_CDS"/>
    <property type="molecule type" value="Genomic_DNA"/>
</dbReference>
<dbReference type="EMBL" id="AL161622">
    <property type="protein sequence ID" value="CAI20454.1"/>
    <property type="status" value="ALT_SEQ"/>
    <property type="molecule type" value="Genomic_DNA"/>
</dbReference>
<dbReference type="EMBL" id="BC126194">
    <property type="protein sequence ID" value="AAI26195.1"/>
    <property type="molecule type" value="mRNA"/>
</dbReference>
<dbReference type="EMBL" id="BC126198">
    <property type="protein sequence ID" value="AAI26199.1"/>
    <property type="molecule type" value="mRNA"/>
</dbReference>
<dbReference type="CCDS" id="CCDS4923.1"/>
<dbReference type="RefSeq" id="NP_859528.1">
    <property type="nucleotide sequence ID" value="NM_181744.4"/>
</dbReference>
<dbReference type="SMR" id="Q6U736"/>
<dbReference type="BioGRID" id="128717">
    <property type="interactions" value="3"/>
</dbReference>
<dbReference type="FunCoup" id="Q6U736">
    <property type="interactions" value="585"/>
</dbReference>
<dbReference type="IntAct" id="Q6U736">
    <property type="interactions" value="2"/>
</dbReference>
<dbReference type="STRING" id="9606.ENSP00000360255"/>
<dbReference type="ChEMBL" id="CHEMBL4523878"/>
<dbReference type="GlyCosmos" id="Q6U736">
    <property type="glycosylation" value="1 site, No reported glycans"/>
</dbReference>
<dbReference type="GlyGen" id="Q6U736">
    <property type="glycosylation" value="1 site"/>
</dbReference>
<dbReference type="iPTMnet" id="Q6U736"/>
<dbReference type="PhosphoSitePlus" id="Q6U736"/>
<dbReference type="BioMuta" id="OPN5"/>
<dbReference type="DMDM" id="116242690"/>
<dbReference type="PaxDb" id="9606-ENSP00000360255"/>
<dbReference type="Antibodypedia" id="16965">
    <property type="antibodies" value="228 antibodies from 30 providers"/>
</dbReference>
<dbReference type="DNASU" id="221391"/>
<dbReference type="Ensembl" id="ENST00000371211.7">
    <property type="protein sequence ID" value="ENSP00000360255.2"/>
    <property type="gene ID" value="ENSG00000124818.16"/>
</dbReference>
<dbReference type="GeneID" id="221391"/>
<dbReference type="KEGG" id="hsa:221391"/>
<dbReference type="MANE-Select" id="ENST00000371211.7">
    <property type="protein sequence ID" value="ENSP00000360255.2"/>
    <property type="RefSeq nucleotide sequence ID" value="NM_181744.4"/>
    <property type="RefSeq protein sequence ID" value="NP_859528.1"/>
</dbReference>
<dbReference type="UCSC" id="uc003ozc.4">
    <property type="organism name" value="human"/>
</dbReference>
<dbReference type="AGR" id="HGNC:19992"/>
<dbReference type="CTD" id="221391"/>
<dbReference type="DisGeNET" id="221391"/>
<dbReference type="GeneCards" id="OPN5"/>
<dbReference type="HGNC" id="HGNC:19992">
    <property type="gene designation" value="OPN5"/>
</dbReference>
<dbReference type="HPA" id="ENSG00000124818">
    <property type="expression patterns" value="Tissue enriched (testis)"/>
</dbReference>
<dbReference type="MIM" id="609042">
    <property type="type" value="gene"/>
</dbReference>
<dbReference type="neXtProt" id="NX_Q6U736"/>
<dbReference type="OpenTargets" id="ENSG00000124818"/>
<dbReference type="PharmGKB" id="PA134942887"/>
<dbReference type="VEuPathDB" id="HostDB:ENSG00000124818"/>
<dbReference type="eggNOG" id="KOG3656">
    <property type="taxonomic scope" value="Eukaryota"/>
</dbReference>
<dbReference type="GeneTree" id="ENSGT01120000271854"/>
<dbReference type="InParanoid" id="Q6U736"/>
<dbReference type="OrthoDB" id="5564849at2759"/>
<dbReference type="PAN-GO" id="Q6U736">
    <property type="GO annotations" value="5 GO annotations based on evolutionary models"/>
</dbReference>
<dbReference type="PhylomeDB" id="Q6U736"/>
<dbReference type="TreeFam" id="TF324998"/>
<dbReference type="PathwayCommons" id="Q6U736"/>
<dbReference type="Reactome" id="R-HSA-418594">
    <property type="pathway name" value="G alpha (i) signalling events"/>
</dbReference>
<dbReference type="Reactome" id="R-HSA-419771">
    <property type="pathway name" value="Opsins"/>
</dbReference>
<dbReference type="BioGRID-ORCS" id="221391">
    <property type="hits" value="15 hits in 1141 CRISPR screens"/>
</dbReference>
<dbReference type="ChiTaRS" id="OPN5">
    <property type="organism name" value="human"/>
</dbReference>
<dbReference type="GeneWiki" id="OPN5"/>
<dbReference type="GenomeRNAi" id="221391"/>
<dbReference type="Pharos" id="Q6U736">
    <property type="development level" value="Tbio"/>
</dbReference>
<dbReference type="PRO" id="PR:Q6U736"/>
<dbReference type="Proteomes" id="UP000005640">
    <property type="component" value="Chromosome 6"/>
</dbReference>
<dbReference type="RNAct" id="Q6U736">
    <property type="molecule type" value="protein"/>
</dbReference>
<dbReference type="Bgee" id="ENSG00000124818">
    <property type="expression patterns" value="Expressed in male germ line stem cell (sensu Vertebrata) in testis and 42 other cell types or tissues"/>
</dbReference>
<dbReference type="ExpressionAtlas" id="Q6U736">
    <property type="expression patterns" value="baseline and differential"/>
</dbReference>
<dbReference type="GO" id="GO:0005737">
    <property type="term" value="C:cytoplasm"/>
    <property type="evidence" value="ECO:0000314"/>
    <property type="project" value="UniProtKB"/>
</dbReference>
<dbReference type="GO" id="GO:0001750">
    <property type="term" value="C:photoreceptor outer segment"/>
    <property type="evidence" value="ECO:0000318"/>
    <property type="project" value="GO_Central"/>
</dbReference>
<dbReference type="GO" id="GO:0005886">
    <property type="term" value="C:plasma membrane"/>
    <property type="evidence" value="ECO:0000314"/>
    <property type="project" value="UniProtKB"/>
</dbReference>
<dbReference type="GO" id="GO:0005502">
    <property type="term" value="F:11-cis retinal binding"/>
    <property type="evidence" value="ECO:0000315"/>
    <property type="project" value="UniProtKB"/>
</dbReference>
<dbReference type="GO" id="GO:0008020">
    <property type="term" value="F:G protein-coupled photoreceptor activity"/>
    <property type="evidence" value="ECO:0000250"/>
    <property type="project" value="UniProtKB"/>
</dbReference>
<dbReference type="GO" id="GO:0071482">
    <property type="term" value="P:cellular response to light stimulus"/>
    <property type="evidence" value="ECO:0000250"/>
    <property type="project" value="UniProtKB"/>
</dbReference>
<dbReference type="GO" id="GO:0071492">
    <property type="term" value="P:cellular response to UV-A"/>
    <property type="evidence" value="ECO:0000314"/>
    <property type="project" value="UniProtKB"/>
</dbReference>
<dbReference type="GO" id="GO:0043153">
    <property type="term" value="P:entrainment of circadian clock by photoperiod"/>
    <property type="evidence" value="ECO:0000250"/>
    <property type="project" value="UniProtKB"/>
</dbReference>
<dbReference type="GO" id="GO:0007186">
    <property type="term" value="P:G protein-coupled receptor signaling pathway"/>
    <property type="evidence" value="ECO:0000318"/>
    <property type="project" value="GO_Central"/>
</dbReference>
<dbReference type="GO" id="GO:1990384">
    <property type="term" value="P:hyaloid vascular plexus regression"/>
    <property type="evidence" value="ECO:0000250"/>
    <property type="project" value="UniProtKB"/>
</dbReference>
<dbReference type="GO" id="GO:0007602">
    <property type="term" value="P:phototransduction"/>
    <property type="evidence" value="ECO:0000250"/>
    <property type="project" value="UniProtKB"/>
</dbReference>
<dbReference type="GO" id="GO:0007604">
    <property type="term" value="P:phototransduction, UV"/>
    <property type="evidence" value="ECO:0000315"/>
    <property type="project" value="UniProtKB"/>
</dbReference>
<dbReference type="GO" id="GO:0007601">
    <property type="term" value="P:visual perception"/>
    <property type="evidence" value="ECO:0007669"/>
    <property type="project" value="UniProtKB-KW"/>
</dbReference>
<dbReference type="CDD" id="cd15074">
    <property type="entry name" value="7tmA_Opsin5_neuropsin"/>
    <property type="match status" value="1"/>
</dbReference>
<dbReference type="FunFam" id="1.20.1070.10:FF:000104">
    <property type="entry name" value="Opsin 5"/>
    <property type="match status" value="1"/>
</dbReference>
<dbReference type="Gene3D" id="1.20.1070.10">
    <property type="entry name" value="Rhodopsin 7-helix transmembrane proteins"/>
    <property type="match status" value="1"/>
</dbReference>
<dbReference type="InterPro" id="IPR050125">
    <property type="entry name" value="GPCR_opsins"/>
</dbReference>
<dbReference type="InterPro" id="IPR000276">
    <property type="entry name" value="GPCR_Rhodpsn"/>
</dbReference>
<dbReference type="InterPro" id="IPR017452">
    <property type="entry name" value="GPCR_Rhodpsn_7TM"/>
</dbReference>
<dbReference type="InterPro" id="IPR002962">
    <property type="entry name" value="Peropsin"/>
</dbReference>
<dbReference type="InterPro" id="IPR027430">
    <property type="entry name" value="Retinal_BS"/>
</dbReference>
<dbReference type="PANTHER" id="PTHR24240">
    <property type="entry name" value="OPSIN"/>
    <property type="match status" value="1"/>
</dbReference>
<dbReference type="Pfam" id="PF00001">
    <property type="entry name" value="7tm_1"/>
    <property type="match status" value="1"/>
</dbReference>
<dbReference type="PRINTS" id="PR00237">
    <property type="entry name" value="GPCRRHODOPSN"/>
</dbReference>
<dbReference type="PRINTS" id="PR01244">
    <property type="entry name" value="PEROPSIN"/>
</dbReference>
<dbReference type="SUPFAM" id="SSF81321">
    <property type="entry name" value="Family A G protein-coupled receptor-like"/>
    <property type="match status" value="1"/>
</dbReference>
<dbReference type="PROSITE" id="PS00237">
    <property type="entry name" value="G_PROTEIN_RECEP_F1_1"/>
    <property type="match status" value="1"/>
</dbReference>
<dbReference type="PROSITE" id="PS50262">
    <property type="entry name" value="G_PROTEIN_RECEP_F1_2"/>
    <property type="match status" value="1"/>
</dbReference>
<dbReference type="PROSITE" id="PS00238">
    <property type="entry name" value="OPSIN"/>
    <property type="match status" value="1"/>
</dbReference>
<name>OPN5_HUMAN</name>
<reference key="1">
    <citation type="journal article" date="2003" name="FEBS Lett.">
        <title>Neuropsin (Opn5): a novel opsin identified in mammalian neural tissue.</title>
        <authorList>
            <person name="Tarttelin E.E."/>
            <person name="Bellingham J."/>
            <person name="Hankins M.W."/>
            <person name="Foster R.G."/>
            <person name="Lucas R.J."/>
        </authorList>
    </citation>
    <scope>NUCLEOTIDE SEQUENCE [MRNA]</scope>
    <scope>TISSUE SPECIFICITY</scope>
</reference>
<reference key="2">
    <citation type="journal article" date="2003" name="FEBS Lett.">
        <title>Seven evolutionarily conserved human rhodopsin G protein-coupled receptors lacking close relatives.</title>
        <authorList>
            <person name="Fredriksson R."/>
            <person name="Hoeglund P.J."/>
            <person name="Gloriam D.E.I."/>
            <person name="Lagerstroem M.C."/>
            <person name="Schioeth H.B."/>
        </authorList>
    </citation>
    <scope>NUCLEOTIDE SEQUENCE [MRNA]</scope>
</reference>
<reference key="3">
    <citation type="journal article" date="2003" name="Proc. Natl. Acad. Sci. U.S.A.">
        <title>The G protein-coupled receptor repertoires of human and mouse.</title>
        <authorList>
            <person name="Vassilatis D.K."/>
            <person name="Hohmann J.G."/>
            <person name="Zeng H."/>
            <person name="Li F."/>
            <person name="Ranchalis J.E."/>
            <person name="Mortrud M.T."/>
            <person name="Brown A."/>
            <person name="Rodriguez S.S."/>
            <person name="Weller J.R."/>
            <person name="Wright A.C."/>
            <person name="Bergmann J.E."/>
            <person name="Gaitanaris G.A."/>
        </authorList>
    </citation>
    <scope>NUCLEOTIDE SEQUENCE [LARGE SCALE MRNA] OF 119-231</scope>
</reference>
<reference key="4">
    <citation type="journal article" date="2003" name="Nature">
        <title>The DNA sequence and analysis of human chromosome 6.</title>
        <authorList>
            <person name="Mungall A.J."/>
            <person name="Palmer S.A."/>
            <person name="Sims S.K."/>
            <person name="Edwards C.A."/>
            <person name="Ashurst J.L."/>
            <person name="Wilming L."/>
            <person name="Jones M.C."/>
            <person name="Horton R."/>
            <person name="Hunt S.E."/>
            <person name="Scott C.E."/>
            <person name="Gilbert J.G.R."/>
            <person name="Clamp M.E."/>
            <person name="Bethel G."/>
            <person name="Milne S."/>
            <person name="Ainscough R."/>
            <person name="Almeida J.P."/>
            <person name="Ambrose K.D."/>
            <person name="Andrews T.D."/>
            <person name="Ashwell R.I.S."/>
            <person name="Babbage A.K."/>
            <person name="Bagguley C.L."/>
            <person name="Bailey J."/>
            <person name="Banerjee R."/>
            <person name="Barker D.J."/>
            <person name="Barlow K.F."/>
            <person name="Bates K."/>
            <person name="Beare D.M."/>
            <person name="Beasley H."/>
            <person name="Beasley O."/>
            <person name="Bird C.P."/>
            <person name="Blakey S.E."/>
            <person name="Bray-Allen S."/>
            <person name="Brook J."/>
            <person name="Brown A.J."/>
            <person name="Brown J.Y."/>
            <person name="Burford D.C."/>
            <person name="Burrill W."/>
            <person name="Burton J."/>
            <person name="Carder C."/>
            <person name="Carter N.P."/>
            <person name="Chapman J.C."/>
            <person name="Clark S.Y."/>
            <person name="Clark G."/>
            <person name="Clee C.M."/>
            <person name="Clegg S."/>
            <person name="Cobley V."/>
            <person name="Collier R.E."/>
            <person name="Collins J.E."/>
            <person name="Colman L.K."/>
            <person name="Corby N.R."/>
            <person name="Coville G.J."/>
            <person name="Culley K.M."/>
            <person name="Dhami P."/>
            <person name="Davies J."/>
            <person name="Dunn M."/>
            <person name="Earthrowl M.E."/>
            <person name="Ellington A.E."/>
            <person name="Evans K.A."/>
            <person name="Faulkner L."/>
            <person name="Francis M.D."/>
            <person name="Frankish A."/>
            <person name="Frankland J."/>
            <person name="French L."/>
            <person name="Garner P."/>
            <person name="Garnett J."/>
            <person name="Ghori M.J."/>
            <person name="Gilby L.M."/>
            <person name="Gillson C.J."/>
            <person name="Glithero R.J."/>
            <person name="Grafham D.V."/>
            <person name="Grant M."/>
            <person name="Gribble S."/>
            <person name="Griffiths C."/>
            <person name="Griffiths M.N.D."/>
            <person name="Hall R."/>
            <person name="Halls K.S."/>
            <person name="Hammond S."/>
            <person name="Harley J.L."/>
            <person name="Hart E.A."/>
            <person name="Heath P.D."/>
            <person name="Heathcott R."/>
            <person name="Holmes S.J."/>
            <person name="Howden P.J."/>
            <person name="Howe K.L."/>
            <person name="Howell G.R."/>
            <person name="Huckle E."/>
            <person name="Humphray S.J."/>
            <person name="Humphries M.D."/>
            <person name="Hunt A.R."/>
            <person name="Johnson C.M."/>
            <person name="Joy A.A."/>
            <person name="Kay M."/>
            <person name="Keenan S.J."/>
            <person name="Kimberley A.M."/>
            <person name="King A."/>
            <person name="Laird G.K."/>
            <person name="Langford C."/>
            <person name="Lawlor S."/>
            <person name="Leongamornlert D.A."/>
            <person name="Leversha M."/>
            <person name="Lloyd C.R."/>
            <person name="Lloyd D.M."/>
            <person name="Loveland J.E."/>
            <person name="Lovell J."/>
            <person name="Martin S."/>
            <person name="Mashreghi-Mohammadi M."/>
            <person name="Maslen G.L."/>
            <person name="Matthews L."/>
            <person name="McCann O.T."/>
            <person name="McLaren S.J."/>
            <person name="McLay K."/>
            <person name="McMurray A."/>
            <person name="Moore M.J.F."/>
            <person name="Mullikin J.C."/>
            <person name="Niblett D."/>
            <person name="Nickerson T."/>
            <person name="Novik K.L."/>
            <person name="Oliver K."/>
            <person name="Overton-Larty E.K."/>
            <person name="Parker A."/>
            <person name="Patel R."/>
            <person name="Pearce A.V."/>
            <person name="Peck A.I."/>
            <person name="Phillimore B.J.C.T."/>
            <person name="Phillips S."/>
            <person name="Plumb R.W."/>
            <person name="Porter K.M."/>
            <person name="Ramsey Y."/>
            <person name="Ranby S.A."/>
            <person name="Rice C.M."/>
            <person name="Ross M.T."/>
            <person name="Searle S.M."/>
            <person name="Sehra H.K."/>
            <person name="Sheridan E."/>
            <person name="Skuce C.D."/>
            <person name="Smith S."/>
            <person name="Smith M."/>
            <person name="Spraggon L."/>
            <person name="Squares S.L."/>
            <person name="Steward C.A."/>
            <person name="Sycamore N."/>
            <person name="Tamlyn-Hall G."/>
            <person name="Tester J."/>
            <person name="Theaker A.J."/>
            <person name="Thomas D.W."/>
            <person name="Thorpe A."/>
            <person name="Tracey A."/>
            <person name="Tromans A."/>
            <person name="Tubby B."/>
            <person name="Wall M."/>
            <person name="Wallis J.M."/>
            <person name="West A.P."/>
            <person name="White S.S."/>
            <person name="Whitehead S.L."/>
            <person name="Whittaker H."/>
            <person name="Wild A."/>
            <person name="Willey D.J."/>
            <person name="Wilmer T.E."/>
            <person name="Wood J.M."/>
            <person name="Wray P.W."/>
            <person name="Wyatt J.C."/>
            <person name="Young L."/>
            <person name="Younger R.M."/>
            <person name="Bentley D.R."/>
            <person name="Coulson A."/>
            <person name="Durbin R.M."/>
            <person name="Hubbard T."/>
            <person name="Sulston J.E."/>
            <person name="Dunham I."/>
            <person name="Rogers J."/>
            <person name="Beck S."/>
        </authorList>
    </citation>
    <scope>NUCLEOTIDE SEQUENCE [LARGE SCALE GENOMIC DNA]</scope>
</reference>
<reference key="5">
    <citation type="journal article" date="2004" name="Genome Res.">
        <title>The status, quality, and expansion of the NIH full-length cDNA project: the Mammalian Gene Collection (MGC).</title>
        <authorList>
            <consortium name="The MGC Project Team"/>
        </authorList>
    </citation>
    <scope>NUCLEOTIDE SEQUENCE [LARGE SCALE MRNA]</scope>
</reference>
<reference key="6">
    <citation type="journal article" date="2011" name="PLoS ONE">
        <title>UV-sensitive photoreceptor protein OPN5 in humans and mice.</title>
        <authorList>
            <person name="Kojima D."/>
            <person name="Mori S."/>
            <person name="Torii M."/>
            <person name="Wada A."/>
            <person name="Morishita R."/>
            <person name="Fukada Y."/>
        </authorList>
    </citation>
    <scope>FUNCTION</scope>
</reference>
<evidence type="ECO:0000250" key="1">
    <source>
        <dbReference type="UniProtKB" id="Q6VZZ7"/>
    </source>
</evidence>
<evidence type="ECO:0000255" key="2"/>
<evidence type="ECO:0000255" key="3">
    <source>
        <dbReference type="PROSITE-ProRule" id="PRU00521"/>
    </source>
</evidence>
<evidence type="ECO:0000269" key="4">
    <source>
    </source>
</evidence>
<evidence type="ECO:0000269" key="5">
    <source>
    </source>
</evidence>
<evidence type="ECO:0000305" key="6"/>
<comment type="function">
    <text evidence="1 5">G-protein coupled receptor which selectively activates G(i) type G proteins via ultraviolet A (UVA) light-mediated activation in the retina (By similarity). Preferentially binds the chromophore 11-cis retinal and is a bistable protein that displays emission peaks at 380 nm (UVA light) and 470 nm (blue light) (PubMed:22043319). Required for the light-response in the inner plexiform layer, and contributes to the regulation of the light-response in the nerve fiber layer, via phosphorylated DAT/SLC6A3 dopamine uptake (By similarity). Involved in local corneal and retinal circadian rhythm photoentrainment via modulation of the UVA light-induced phase-shift of the retina clock (By similarity). Acts as a circadian photoreceptor in the outer ear, via modulation of circadian clock-gene expression in response to violet light during the light-to-dark transition phase and night phase of the circadian cycle (By similarity). Required in the retina to negatively regulate hyaloid vessel regression during postnatal development via light-dependent OPN5-SLC32A1-DRD2-VEGFR2 signaling (By similarity). Involved in the light-dependent regulation of retina and vitreous compartment dopamine levels (By similarity).</text>
</comment>
<comment type="subcellular location">
    <subcellularLocation>
        <location evidence="6">Cell membrane</location>
        <topology evidence="2">Multi-pass membrane protein</topology>
    </subcellularLocation>
</comment>
<comment type="tissue specificity">
    <text evidence="4">Detected in brain and retina and cell lines derived from neural retina.</text>
</comment>
<comment type="PTM">
    <text evidence="6">It is uncertain whether Cys-315 or Cys-316 is palmitoylated.</text>
</comment>
<comment type="similarity">
    <text evidence="3">Belongs to the G-protein coupled receptor 1 family. Opsin subfamily.</text>
</comment>
<comment type="sequence caution" evidence="6">
    <conflict type="erroneous gene model prediction">
        <sequence resource="EMBL-CDS" id="CAI20454"/>
    </conflict>
</comment>
<accession>Q6U736</accession>
<accession>A0AV33</accession>
<accession>Q5T5B9</accession>
<accession>Q5T886</accession>
<accession>Q7Z603</accession>
<accession>Q86SL5</accession>
<organism>
    <name type="scientific">Homo sapiens</name>
    <name type="common">Human</name>
    <dbReference type="NCBI Taxonomy" id="9606"/>
    <lineage>
        <taxon>Eukaryota</taxon>
        <taxon>Metazoa</taxon>
        <taxon>Chordata</taxon>
        <taxon>Craniata</taxon>
        <taxon>Vertebrata</taxon>
        <taxon>Euteleostomi</taxon>
        <taxon>Mammalia</taxon>
        <taxon>Eutheria</taxon>
        <taxon>Euarchontoglires</taxon>
        <taxon>Primates</taxon>
        <taxon>Haplorrhini</taxon>
        <taxon>Catarrhini</taxon>
        <taxon>Hominidae</taxon>
        <taxon>Homo</taxon>
    </lineage>
</organism>
<proteinExistence type="evidence at protein level"/>
<protein>
    <recommendedName>
        <fullName>Opsin-5</fullName>
    </recommendedName>
    <alternativeName>
        <fullName>G-protein coupled receptor 136</fullName>
    </alternativeName>
    <alternativeName>
        <fullName>G-protein coupled receptor PGR12</fullName>
    </alternativeName>
    <alternativeName>
        <fullName>Neuropsin</fullName>
    </alternativeName>
    <alternativeName>
        <fullName>Transmembrane protein 13</fullName>
    </alternativeName>
</protein>
<feature type="chain" id="PRO_0000197817" description="Opsin-5">
    <location>
        <begin position="1"/>
        <end position="354"/>
    </location>
</feature>
<feature type="topological domain" description="Extracellular" evidence="2">
    <location>
        <begin position="1"/>
        <end position="33"/>
    </location>
</feature>
<feature type="transmembrane region" description="Helical; Name=1" evidence="2">
    <location>
        <begin position="34"/>
        <end position="54"/>
    </location>
</feature>
<feature type="topological domain" description="Cytoplasmic" evidence="2">
    <location>
        <begin position="55"/>
        <end position="74"/>
    </location>
</feature>
<feature type="transmembrane region" description="Helical; Name=2" evidence="2">
    <location>
        <begin position="75"/>
        <end position="95"/>
    </location>
</feature>
<feature type="topological domain" description="Extracellular" evidence="2">
    <location>
        <begin position="96"/>
        <end position="108"/>
    </location>
</feature>
<feature type="transmembrane region" description="Helical; Name=3" evidence="2">
    <location>
        <begin position="109"/>
        <end position="129"/>
    </location>
</feature>
<feature type="topological domain" description="Cytoplasmic" evidence="2">
    <location>
        <begin position="130"/>
        <end position="150"/>
    </location>
</feature>
<feature type="transmembrane region" description="Helical; Name=4" evidence="2">
    <location>
        <begin position="151"/>
        <end position="171"/>
    </location>
</feature>
<feature type="topological domain" description="Extracellular" evidence="2">
    <location>
        <begin position="172"/>
        <end position="197"/>
    </location>
</feature>
<feature type="transmembrane region" description="Helical; Name=5" evidence="2">
    <location>
        <begin position="198"/>
        <end position="218"/>
    </location>
</feature>
<feature type="topological domain" description="Cytoplasmic" evidence="2">
    <location>
        <begin position="219"/>
        <end position="252"/>
    </location>
</feature>
<feature type="transmembrane region" description="Helical; Name=6" evidence="2">
    <location>
        <begin position="253"/>
        <end position="273"/>
    </location>
</feature>
<feature type="topological domain" description="Extracellular" evidence="2">
    <location>
        <begin position="274"/>
        <end position="288"/>
    </location>
</feature>
<feature type="transmembrane region" description="Helical; Name=7" evidence="2">
    <location>
        <begin position="289"/>
        <end position="309"/>
    </location>
</feature>
<feature type="topological domain" description="Cytoplasmic" evidence="2">
    <location>
        <begin position="310"/>
        <end position="353"/>
    </location>
</feature>
<feature type="modified residue" description="N6-(retinylidene)lysine">
    <location>
        <position position="296"/>
    </location>
</feature>
<feature type="lipid moiety-binding region" description="S-palmitoyl cysteine" evidence="2">
    <location>
        <position position="315"/>
    </location>
</feature>
<feature type="lipid moiety-binding region" description="S-palmitoyl cysteine" evidence="2">
    <location>
        <position position="316"/>
    </location>
</feature>
<feature type="glycosylation site" description="N-linked (GlcNAc...) asparagine" evidence="2">
    <location>
        <position position="4"/>
    </location>
</feature>
<feature type="disulfide bond" evidence="3">
    <location>
        <begin position="106"/>
        <end position="183"/>
    </location>
</feature>
<feature type="sequence conflict" description="In Ref. 2; AAP72128." evidence="6" ref="2">
    <location>
        <begin position="84"/>
        <end position="86"/>
    </location>
</feature>
<feature type="sequence conflict" description="In Ref. 3; AAO85127." evidence="6" ref="3">
    <location>
        <begin position="133"/>
        <end position="145"/>
    </location>
</feature>
<feature type="sequence conflict" description="In Ref. 2; AAP72128 and 4; CAI20454." evidence="6" ref="2 4">
    <original>WE</original>
    <variation>V</variation>
    <location>
        <begin position="353"/>
        <end position="354"/>
    </location>
</feature>
<keyword id="KW-1003">Cell membrane</keyword>
<keyword id="KW-0157">Chromophore</keyword>
<keyword id="KW-1015">Disulfide bond</keyword>
<keyword id="KW-0297">G-protein coupled receptor</keyword>
<keyword id="KW-0325">Glycoprotein</keyword>
<keyword id="KW-0449">Lipoprotein</keyword>
<keyword id="KW-0472">Membrane</keyword>
<keyword id="KW-0564">Palmitate</keyword>
<keyword id="KW-0600">Photoreceptor protein</keyword>
<keyword id="KW-0675">Receptor</keyword>
<keyword id="KW-1185">Reference proteome</keyword>
<keyword id="KW-0681">Retinal protein</keyword>
<keyword id="KW-0716">Sensory transduction</keyword>
<keyword id="KW-0807">Transducer</keyword>
<keyword id="KW-0812">Transmembrane</keyword>
<keyword id="KW-1133">Transmembrane helix</keyword>
<keyword id="KW-0844">Vision</keyword>